<proteinExistence type="evidence at protein level"/>
<comment type="interaction">
    <interactant intactId="EBI-15655983">
        <id>P9WFJ9</id>
    </interactant>
    <interactant intactId="EBI-15655915">
        <id>P96927</id>
        <label>MT0665</label>
    </interactant>
    <organismsDiffer>true</organismsDiffer>
    <experiments>4</experiments>
</comment>
<comment type="similarity">
    <text evidence="1">Belongs to the UPF0336 family.</text>
</comment>
<evidence type="ECO:0000255" key="1">
    <source>
        <dbReference type="HAMAP-Rule" id="MF_00799"/>
    </source>
</evidence>
<evidence type="ECO:0007829" key="2">
    <source>
        <dbReference type="PDB" id="5ZY8"/>
    </source>
</evidence>
<feature type="chain" id="PRO_0000216144" description="UPF0336 protein Rv0637">
    <location>
        <begin position="1"/>
        <end position="166"/>
    </location>
</feature>
<feature type="strand" evidence="2">
    <location>
        <begin position="11"/>
        <end position="13"/>
    </location>
</feature>
<feature type="helix" evidence="2">
    <location>
        <begin position="22"/>
        <end position="31"/>
    </location>
</feature>
<feature type="helix" evidence="2">
    <location>
        <begin position="37"/>
        <end position="39"/>
    </location>
</feature>
<feature type="helix" evidence="2">
    <location>
        <begin position="42"/>
        <end position="47"/>
    </location>
</feature>
<feature type="turn" evidence="2">
    <location>
        <begin position="57"/>
        <end position="60"/>
    </location>
</feature>
<feature type="helix" evidence="2">
    <location>
        <begin position="61"/>
        <end position="74"/>
    </location>
</feature>
<feature type="strand" evidence="2">
    <location>
        <begin position="85"/>
        <end position="95"/>
    </location>
</feature>
<feature type="strand" evidence="2">
    <location>
        <begin position="102"/>
        <end position="112"/>
    </location>
</feature>
<feature type="strand" evidence="2">
    <location>
        <begin position="121"/>
        <end position="129"/>
    </location>
</feature>
<feature type="strand" evidence="2">
    <location>
        <begin position="134"/>
        <end position="143"/>
    </location>
</feature>
<sequence length="166" mass="18930">MALKTDIRGMIWRYPDYFIVGREQCREFARAVKCDHPAFFSEEAAADLGYDALVAPLTFVTILAKYVQLDFFRHVDVGMETMQIVQVDQRFVFHKPVLAGDKLWARMDIHSVDERFGADIVVTRNLCTNDDGELVMEAYTTLMGQQGDGSARLKWDKESGQVIRTA</sequence>
<name>Y637_MYCTU</name>
<keyword id="KW-0002">3D-structure</keyword>
<keyword id="KW-1185">Reference proteome</keyword>
<accession>P9WFJ9</accession>
<accession>L0T4B1</accession>
<accession>P96928</accession>
<accession>Q7D9H8</accession>
<gene>
    <name type="ordered locus">Rv0637</name>
    <name type="ORF">MTCY20H10.18</name>
</gene>
<protein>
    <recommendedName>
        <fullName evidence="1">UPF0336 protein Rv0637</fullName>
    </recommendedName>
</protein>
<reference key="1">
    <citation type="journal article" date="1998" name="Nature">
        <title>Deciphering the biology of Mycobacterium tuberculosis from the complete genome sequence.</title>
        <authorList>
            <person name="Cole S.T."/>
            <person name="Brosch R."/>
            <person name="Parkhill J."/>
            <person name="Garnier T."/>
            <person name="Churcher C.M."/>
            <person name="Harris D.E."/>
            <person name="Gordon S.V."/>
            <person name="Eiglmeier K."/>
            <person name="Gas S."/>
            <person name="Barry C.E. III"/>
            <person name="Tekaia F."/>
            <person name="Badcock K."/>
            <person name="Basham D."/>
            <person name="Brown D."/>
            <person name="Chillingworth T."/>
            <person name="Connor R."/>
            <person name="Davies R.M."/>
            <person name="Devlin K."/>
            <person name="Feltwell T."/>
            <person name="Gentles S."/>
            <person name="Hamlin N."/>
            <person name="Holroyd S."/>
            <person name="Hornsby T."/>
            <person name="Jagels K."/>
            <person name="Krogh A."/>
            <person name="McLean J."/>
            <person name="Moule S."/>
            <person name="Murphy L.D."/>
            <person name="Oliver S."/>
            <person name="Osborne J."/>
            <person name="Quail M.A."/>
            <person name="Rajandream M.A."/>
            <person name="Rogers J."/>
            <person name="Rutter S."/>
            <person name="Seeger K."/>
            <person name="Skelton S."/>
            <person name="Squares S."/>
            <person name="Squares R."/>
            <person name="Sulston J.E."/>
            <person name="Taylor K."/>
            <person name="Whitehead S."/>
            <person name="Barrell B.G."/>
        </authorList>
    </citation>
    <scope>NUCLEOTIDE SEQUENCE [LARGE SCALE GENOMIC DNA]</scope>
    <source>
        <strain>ATCC 25618 / H37Rv</strain>
    </source>
</reference>
<reference key="2">
    <citation type="journal article" date="2011" name="Mol. Cell. Proteomics">
        <title>Proteogenomic analysis of Mycobacterium tuberculosis by high resolution mass spectrometry.</title>
        <authorList>
            <person name="Kelkar D.S."/>
            <person name="Kumar D."/>
            <person name="Kumar P."/>
            <person name="Balakrishnan L."/>
            <person name="Muthusamy B."/>
            <person name="Yadav A.K."/>
            <person name="Shrivastava P."/>
            <person name="Marimuthu A."/>
            <person name="Anand S."/>
            <person name="Sundaram H."/>
            <person name="Kingsbury R."/>
            <person name="Harsha H.C."/>
            <person name="Nair B."/>
            <person name="Prasad T.S."/>
            <person name="Chauhan D.S."/>
            <person name="Katoch K."/>
            <person name="Katoch V.M."/>
            <person name="Kumar P."/>
            <person name="Chaerkady R."/>
            <person name="Ramachandran S."/>
            <person name="Dash D."/>
            <person name="Pandey A."/>
        </authorList>
    </citation>
    <scope>IDENTIFICATION BY MASS SPECTROMETRY [LARGE SCALE ANALYSIS]</scope>
    <source>
        <strain>ATCC 25618 / H37Rv</strain>
    </source>
</reference>
<dbReference type="EMBL" id="AL123456">
    <property type="protein sequence ID" value="CCP43380.1"/>
    <property type="molecule type" value="Genomic_DNA"/>
</dbReference>
<dbReference type="PIR" id="B70613">
    <property type="entry name" value="B70613"/>
</dbReference>
<dbReference type="PDB" id="5ZY8">
    <property type="method" value="X-ray"/>
    <property type="resolution" value="2.90 A"/>
    <property type="chains" value="A/C=1-158"/>
</dbReference>
<dbReference type="PDBsum" id="5ZY8"/>
<dbReference type="SMR" id="P9WFJ9"/>
<dbReference type="FunCoup" id="P9WFJ9">
    <property type="interactions" value="1"/>
</dbReference>
<dbReference type="IntAct" id="P9WFJ9">
    <property type="interactions" value="1"/>
</dbReference>
<dbReference type="STRING" id="83332.Rv0637"/>
<dbReference type="PaxDb" id="83332-Rv0637"/>
<dbReference type="DNASU" id="888019"/>
<dbReference type="KEGG" id="mtu:Rv0637"/>
<dbReference type="KEGG" id="mtv:RVBD_0637"/>
<dbReference type="TubercuList" id="Rv0637"/>
<dbReference type="eggNOG" id="COG2030">
    <property type="taxonomic scope" value="Bacteria"/>
</dbReference>
<dbReference type="InParanoid" id="P9WFJ9"/>
<dbReference type="OrthoDB" id="5415111at2"/>
<dbReference type="PhylomeDB" id="P9WFJ9"/>
<dbReference type="BioCyc" id="MetaCyc:G185E-4779-MONOMER"/>
<dbReference type="BRENDA" id="4.2.1.157">
    <property type="organism ID" value="3445"/>
</dbReference>
<dbReference type="Proteomes" id="UP000001584">
    <property type="component" value="Chromosome"/>
</dbReference>
<dbReference type="GO" id="GO:0005886">
    <property type="term" value="C:plasma membrane"/>
    <property type="evidence" value="ECO:0007005"/>
    <property type="project" value="MTBBASE"/>
</dbReference>
<dbReference type="GO" id="GO:0019171">
    <property type="term" value="F:(3R)-hydroxyacyl-[acyl-carrier-protein] dehydratase activity"/>
    <property type="evidence" value="ECO:0000314"/>
    <property type="project" value="MTBBASE"/>
</dbReference>
<dbReference type="GO" id="GO:0006633">
    <property type="term" value="P:fatty acid biosynthetic process"/>
    <property type="evidence" value="ECO:0000318"/>
    <property type="project" value="GO_Central"/>
</dbReference>
<dbReference type="GO" id="GO:0030497">
    <property type="term" value="P:fatty acid elongation"/>
    <property type="evidence" value="ECO:0000314"/>
    <property type="project" value="MTBBASE"/>
</dbReference>
<dbReference type="GO" id="GO:0042759">
    <property type="term" value="P:long-chain fatty acid biosynthetic process"/>
    <property type="evidence" value="ECO:0000314"/>
    <property type="project" value="MTBBASE"/>
</dbReference>
<dbReference type="CDD" id="cd03441">
    <property type="entry name" value="R_hydratase_like"/>
    <property type="match status" value="1"/>
</dbReference>
<dbReference type="Gene3D" id="3.10.129.10">
    <property type="entry name" value="Hotdog Thioesterase"/>
    <property type="match status" value="1"/>
</dbReference>
<dbReference type="HAMAP" id="MF_00799">
    <property type="entry name" value="UPF0336"/>
    <property type="match status" value="1"/>
</dbReference>
<dbReference type="InterPro" id="IPR039569">
    <property type="entry name" value="FAS1-like_DH_region"/>
</dbReference>
<dbReference type="InterPro" id="IPR016709">
    <property type="entry name" value="HadA-like"/>
</dbReference>
<dbReference type="InterPro" id="IPR029069">
    <property type="entry name" value="HotDog_dom_sf"/>
</dbReference>
<dbReference type="InterPro" id="IPR050965">
    <property type="entry name" value="UPF0336/Enoyl-CoA_hydratase"/>
</dbReference>
<dbReference type="NCBIfam" id="NF010244">
    <property type="entry name" value="PRK13691.1"/>
    <property type="match status" value="1"/>
</dbReference>
<dbReference type="PANTHER" id="PTHR43437:SF3">
    <property type="entry name" value="HYDROXYACYL-THIOESTER DEHYDRATASE TYPE 2, MITOCHONDRIAL"/>
    <property type="match status" value="1"/>
</dbReference>
<dbReference type="PANTHER" id="PTHR43437">
    <property type="entry name" value="HYDROXYACYL-THIOESTER DEHYDRATASE TYPE 2, MITOCHONDRIAL-RELATED"/>
    <property type="match status" value="1"/>
</dbReference>
<dbReference type="Pfam" id="PF13452">
    <property type="entry name" value="FAS1_DH_region"/>
    <property type="match status" value="1"/>
</dbReference>
<dbReference type="PIRSF" id="PIRSF018072">
    <property type="entry name" value="UCP018072"/>
    <property type="match status" value="1"/>
</dbReference>
<dbReference type="SUPFAM" id="SSF54637">
    <property type="entry name" value="Thioesterase/thiol ester dehydrase-isomerase"/>
    <property type="match status" value="1"/>
</dbReference>
<organism>
    <name type="scientific">Mycobacterium tuberculosis (strain ATCC 25618 / H37Rv)</name>
    <dbReference type="NCBI Taxonomy" id="83332"/>
    <lineage>
        <taxon>Bacteria</taxon>
        <taxon>Bacillati</taxon>
        <taxon>Actinomycetota</taxon>
        <taxon>Actinomycetes</taxon>
        <taxon>Mycobacteriales</taxon>
        <taxon>Mycobacteriaceae</taxon>
        <taxon>Mycobacterium</taxon>
        <taxon>Mycobacterium tuberculosis complex</taxon>
    </lineage>
</organism>